<reference key="1">
    <citation type="submission" date="2005-11" db="EMBL/GenBank/DDBJ databases">
        <authorList>
            <consortium name="NIH - Mammalian Gene Collection (MGC) project"/>
        </authorList>
    </citation>
    <scope>NUCLEOTIDE SEQUENCE [LARGE SCALE MRNA]</scope>
    <source>
        <strain>Crossbred X Angus</strain>
        <tissue>Liver</tissue>
    </source>
</reference>
<name>ARFRP_BOVIN</name>
<dbReference type="EMBL" id="BC109550">
    <property type="protein sequence ID" value="AAI09551.1"/>
    <property type="molecule type" value="mRNA"/>
</dbReference>
<dbReference type="RefSeq" id="NP_001032696.1">
    <property type="nucleotide sequence ID" value="NM_001037607.1"/>
</dbReference>
<dbReference type="RefSeq" id="XP_024856398.1">
    <property type="nucleotide sequence ID" value="XM_025000630.2"/>
</dbReference>
<dbReference type="SMR" id="Q32LJ2"/>
<dbReference type="FunCoup" id="Q32LJ2">
    <property type="interactions" value="3216"/>
</dbReference>
<dbReference type="STRING" id="9913.ENSBTAP00000009858"/>
<dbReference type="PaxDb" id="9913-ENSBTAP00000009858"/>
<dbReference type="GeneID" id="525394"/>
<dbReference type="KEGG" id="bta:525394"/>
<dbReference type="CTD" id="10139"/>
<dbReference type="VEuPathDB" id="HostDB:ENSBTAG00000007497"/>
<dbReference type="eggNOG" id="KOG0076">
    <property type="taxonomic scope" value="Eukaryota"/>
</dbReference>
<dbReference type="HOGENOM" id="CLU_040729_7_2_1"/>
<dbReference type="InParanoid" id="Q32LJ2"/>
<dbReference type="OMA" id="HGFYKYM"/>
<dbReference type="OrthoDB" id="414781at2759"/>
<dbReference type="TreeFam" id="TF105788"/>
<dbReference type="Reactome" id="R-BTA-6811440">
    <property type="pathway name" value="Retrograde transport at the Trans-Golgi-Network"/>
</dbReference>
<dbReference type="Proteomes" id="UP000009136">
    <property type="component" value="Chromosome 13"/>
</dbReference>
<dbReference type="Bgee" id="ENSBTAG00000007497">
    <property type="expression patterns" value="Expressed in digestive system secreted substance and 104 other cell types or tissues"/>
</dbReference>
<dbReference type="GO" id="GO:0005794">
    <property type="term" value="C:Golgi apparatus"/>
    <property type="evidence" value="ECO:0000318"/>
    <property type="project" value="GO_Central"/>
</dbReference>
<dbReference type="GO" id="GO:0005525">
    <property type="term" value="F:GTP binding"/>
    <property type="evidence" value="ECO:0000318"/>
    <property type="project" value="GO_Central"/>
</dbReference>
<dbReference type="GO" id="GO:0003924">
    <property type="term" value="F:GTPase activity"/>
    <property type="evidence" value="ECO:0000318"/>
    <property type="project" value="GO_Central"/>
</dbReference>
<dbReference type="GO" id="GO:0043001">
    <property type="term" value="P:Golgi to plasma membrane protein transport"/>
    <property type="evidence" value="ECO:0000318"/>
    <property type="project" value="GO_Central"/>
</dbReference>
<dbReference type="GO" id="GO:0006886">
    <property type="term" value="P:intracellular protein transport"/>
    <property type="evidence" value="ECO:0000318"/>
    <property type="project" value="GO_Central"/>
</dbReference>
<dbReference type="GO" id="GO:0034067">
    <property type="term" value="P:protein localization to Golgi apparatus"/>
    <property type="evidence" value="ECO:0000318"/>
    <property type="project" value="GO_Central"/>
</dbReference>
<dbReference type="CDD" id="cd04160">
    <property type="entry name" value="Arfrp1"/>
    <property type="match status" value="1"/>
</dbReference>
<dbReference type="FunFam" id="3.40.50.300:FF:000509">
    <property type="entry name" value="ADP-ribosylation factor-related protein 1"/>
    <property type="match status" value="1"/>
</dbReference>
<dbReference type="Gene3D" id="3.40.50.300">
    <property type="entry name" value="P-loop containing nucleotide triphosphate hydrolases"/>
    <property type="match status" value="1"/>
</dbReference>
<dbReference type="InterPro" id="IPR027417">
    <property type="entry name" value="P-loop_NTPase"/>
</dbReference>
<dbReference type="InterPro" id="IPR005225">
    <property type="entry name" value="Small_GTP-bd"/>
</dbReference>
<dbReference type="InterPro" id="IPR024156">
    <property type="entry name" value="Small_GTPase_ARF"/>
</dbReference>
<dbReference type="InterPro" id="IPR006689">
    <property type="entry name" value="Small_GTPase_ARF/SAR"/>
</dbReference>
<dbReference type="NCBIfam" id="TIGR00231">
    <property type="entry name" value="small_GTP"/>
    <property type="match status" value="1"/>
</dbReference>
<dbReference type="PANTHER" id="PTHR45909">
    <property type="entry name" value="ADP-RIBOSYLATION FACTOR-RELATED PROTEIN 1"/>
    <property type="match status" value="1"/>
</dbReference>
<dbReference type="PANTHER" id="PTHR45909:SF1">
    <property type="entry name" value="ADP-RIBOSYLATION FACTOR-RELATED PROTEIN 1"/>
    <property type="match status" value="1"/>
</dbReference>
<dbReference type="Pfam" id="PF00025">
    <property type="entry name" value="Arf"/>
    <property type="match status" value="1"/>
</dbReference>
<dbReference type="PRINTS" id="PR00449">
    <property type="entry name" value="RASTRNSFRMNG"/>
</dbReference>
<dbReference type="SMART" id="SM00177">
    <property type="entry name" value="ARF"/>
    <property type="match status" value="1"/>
</dbReference>
<dbReference type="SMART" id="SM00175">
    <property type="entry name" value="RAB"/>
    <property type="match status" value="1"/>
</dbReference>
<dbReference type="SMART" id="SM00178">
    <property type="entry name" value="SAR"/>
    <property type="match status" value="1"/>
</dbReference>
<dbReference type="SUPFAM" id="SSF52540">
    <property type="entry name" value="P-loop containing nucleoside triphosphate hydrolases"/>
    <property type="match status" value="1"/>
</dbReference>
<dbReference type="PROSITE" id="PS51417">
    <property type="entry name" value="ARF"/>
    <property type="match status" value="1"/>
</dbReference>
<accession>Q32LJ2</accession>
<feature type="chain" id="PRO_0000245356" description="ADP-ribosylation factor-related protein 1">
    <location>
        <begin position="1"/>
        <end position="201"/>
    </location>
</feature>
<feature type="binding site" evidence="1">
    <location>
        <begin position="24"/>
        <end position="31"/>
    </location>
    <ligand>
        <name>GTP</name>
        <dbReference type="ChEBI" id="CHEBI:37565"/>
    </ligand>
</feature>
<feature type="binding site" evidence="1">
    <location>
        <begin position="75"/>
        <end position="79"/>
    </location>
    <ligand>
        <name>GTP</name>
        <dbReference type="ChEBI" id="CHEBI:37565"/>
    </ligand>
</feature>
<feature type="binding site" evidence="1">
    <location>
        <begin position="134"/>
        <end position="137"/>
    </location>
    <ligand>
        <name>GTP</name>
        <dbReference type="ChEBI" id="CHEBI:37565"/>
    </ligand>
</feature>
<feature type="modified residue" description="N-acetylmethionine" evidence="2">
    <location>
        <position position="1"/>
    </location>
</feature>
<proteinExistence type="evidence at transcript level"/>
<gene>
    <name type="primary">ARFRP1</name>
</gene>
<organism>
    <name type="scientific">Bos taurus</name>
    <name type="common">Bovine</name>
    <dbReference type="NCBI Taxonomy" id="9913"/>
    <lineage>
        <taxon>Eukaryota</taxon>
        <taxon>Metazoa</taxon>
        <taxon>Chordata</taxon>
        <taxon>Craniata</taxon>
        <taxon>Vertebrata</taxon>
        <taxon>Euteleostomi</taxon>
        <taxon>Mammalia</taxon>
        <taxon>Eutheria</taxon>
        <taxon>Laurasiatheria</taxon>
        <taxon>Artiodactyla</taxon>
        <taxon>Ruminantia</taxon>
        <taxon>Pecora</taxon>
        <taxon>Bovidae</taxon>
        <taxon>Bovinae</taxon>
        <taxon>Bos</taxon>
    </lineage>
</organism>
<evidence type="ECO:0000250" key="1"/>
<evidence type="ECO:0000250" key="2">
    <source>
        <dbReference type="UniProtKB" id="Q13795"/>
    </source>
</evidence>
<evidence type="ECO:0000250" key="3">
    <source>
        <dbReference type="UniProtKB" id="Q8BXL7"/>
    </source>
</evidence>
<evidence type="ECO:0000305" key="4"/>
<comment type="function">
    <text evidence="3">Trans-Golgi-associated GTPase that regulates protein sorting. Controls the targeting of ARL1 and its effector to the trans-Golgi. Required for the lipidation of chylomicrons in the intestine and required for VLDL lipidation in the liver.</text>
</comment>
<comment type="subunit">
    <text evidence="2">Interacts with SYS1.</text>
</comment>
<comment type="subcellular location">
    <subcellularLocation>
        <location>Golgi apparatus</location>
    </subcellularLocation>
    <subcellularLocation>
        <location evidence="3">Golgi apparatus</location>
        <location evidence="3">trans-Golgi network</location>
    </subcellularLocation>
    <text evidence="3">Located in the trans-Golgi in the GTP-bound active state.</text>
</comment>
<comment type="similarity">
    <text evidence="4">Belongs to the small GTPase superfamily. Arf family.</text>
</comment>
<keyword id="KW-0007">Acetylation</keyword>
<keyword id="KW-0333">Golgi apparatus</keyword>
<keyword id="KW-0342">GTP-binding</keyword>
<keyword id="KW-0547">Nucleotide-binding</keyword>
<keyword id="KW-1185">Reference proteome</keyword>
<protein>
    <recommendedName>
        <fullName>ADP-ribosylation factor-related protein 1</fullName>
        <shortName>ARF-related protein 1</shortName>
    </recommendedName>
</protein>
<sequence>MYTLLSGLYKYMFQKDEYCVLILGLDNAGKTTFLEQSKTRFNKNYKGMSLSKITTTVGLNIGTVDVGKARLMFWDLGGQEELQSLWDKYYAECHGVIYVIDSTDEERLSESKQAFEKMVTSEALDGVPILVLANKQDVETCLSIPDIKTAFSDCASKIGRRDCLTQACSALTGKGVREGIEWMVKCVVRNVHRPPRQRDIT</sequence>